<keyword id="KW-0963">Cytoplasm</keyword>
<keyword id="KW-0227">DNA damage</keyword>
<keyword id="KW-0233">DNA recombination</keyword>
<keyword id="KW-0234">DNA repair</keyword>
<keyword id="KW-0238">DNA-binding</keyword>
<sequence>MYAYLKGIITKITAKYIVLETNGIGYILHVANPYAYSGQVNQEDQIYVHQVVREDAHLLYGFRSEDEKKLFLSLISVSGIGPVSALAIIAADDNAGLVQAIETKNITYLTKFPKIGKKTAQQMVLDLEGKVVVAGDDLPAKIAVQASAENQELEEAMEAMLALGYKATELKKIKKFFEGTTDTAENYIKSALKMLVK</sequence>
<accession>C1CP48</accession>
<reference key="1">
    <citation type="journal article" date="2010" name="Genome Biol.">
        <title>Structure and dynamics of the pan-genome of Streptococcus pneumoniae and closely related species.</title>
        <authorList>
            <person name="Donati C."/>
            <person name="Hiller N.L."/>
            <person name="Tettelin H."/>
            <person name="Muzzi A."/>
            <person name="Croucher N.J."/>
            <person name="Angiuoli S.V."/>
            <person name="Oggioni M."/>
            <person name="Dunning Hotopp J.C."/>
            <person name="Hu F.Z."/>
            <person name="Riley D.R."/>
            <person name="Covacci A."/>
            <person name="Mitchell T.J."/>
            <person name="Bentley S.D."/>
            <person name="Kilian M."/>
            <person name="Ehrlich G.D."/>
            <person name="Rappuoli R."/>
            <person name="Moxon E.R."/>
            <person name="Masignani V."/>
        </authorList>
    </citation>
    <scope>NUCLEOTIDE SEQUENCE [LARGE SCALE GENOMIC DNA]</scope>
    <source>
        <strain>Taiwan19F-14</strain>
    </source>
</reference>
<gene>
    <name evidence="1" type="primary">ruvA</name>
    <name type="ordered locus">SPT_0216</name>
</gene>
<name>RUVA_STRZT</name>
<comment type="function">
    <text evidence="1">The RuvA-RuvB-RuvC complex processes Holliday junction (HJ) DNA during genetic recombination and DNA repair, while the RuvA-RuvB complex plays an important role in the rescue of blocked DNA replication forks via replication fork reversal (RFR). RuvA specifically binds to HJ cruciform DNA, conferring on it an open structure. The RuvB hexamer acts as an ATP-dependent pump, pulling dsDNA into and through the RuvAB complex. HJ branch migration allows RuvC to scan DNA until it finds its consensus sequence, where it cleaves and resolves the cruciform DNA.</text>
</comment>
<comment type="subunit">
    <text evidence="1">Homotetramer. Forms an RuvA(8)-RuvB(12)-Holliday junction (HJ) complex. HJ DNA is sandwiched between 2 RuvA tetramers; dsDNA enters through RuvA and exits via RuvB. An RuvB hexamer assembles on each DNA strand where it exits the tetramer. Each RuvB hexamer is contacted by two RuvA subunits (via domain III) on 2 adjacent RuvB subunits; this complex drives branch migration. In the full resolvosome a probable DNA-RuvA(4)-RuvB(12)-RuvC(2) complex forms which resolves the HJ.</text>
</comment>
<comment type="subcellular location">
    <subcellularLocation>
        <location evidence="1">Cytoplasm</location>
    </subcellularLocation>
</comment>
<comment type="domain">
    <text evidence="1">Has three domains with a flexible linker between the domains II and III and assumes an 'L' shape. Domain III is highly mobile and contacts RuvB.</text>
</comment>
<comment type="similarity">
    <text evidence="1">Belongs to the RuvA family.</text>
</comment>
<protein>
    <recommendedName>
        <fullName evidence="1">Holliday junction branch migration complex subunit RuvA</fullName>
    </recommendedName>
</protein>
<organism>
    <name type="scientific">Streptococcus pneumoniae (strain Taiwan19F-14)</name>
    <dbReference type="NCBI Taxonomy" id="487213"/>
    <lineage>
        <taxon>Bacteria</taxon>
        <taxon>Bacillati</taxon>
        <taxon>Bacillota</taxon>
        <taxon>Bacilli</taxon>
        <taxon>Lactobacillales</taxon>
        <taxon>Streptococcaceae</taxon>
        <taxon>Streptococcus</taxon>
    </lineage>
</organism>
<evidence type="ECO:0000255" key="1">
    <source>
        <dbReference type="HAMAP-Rule" id="MF_00031"/>
    </source>
</evidence>
<proteinExistence type="inferred from homology"/>
<dbReference type="EMBL" id="CP000921">
    <property type="protein sequence ID" value="ACO22435.1"/>
    <property type="molecule type" value="Genomic_DNA"/>
</dbReference>
<dbReference type="RefSeq" id="WP_000271492.1">
    <property type="nucleotide sequence ID" value="NC_012469.1"/>
</dbReference>
<dbReference type="SMR" id="C1CP48"/>
<dbReference type="KEGG" id="snt:SPT_0216"/>
<dbReference type="HOGENOM" id="CLU_087936_1_0_9"/>
<dbReference type="GO" id="GO:0005737">
    <property type="term" value="C:cytoplasm"/>
    <property type="evidence" value="ECO:0007669"/>
    <property type="project" value="UniProtKB-SubCell"/>
</dbReference>
<dbReference type="GO" id="GO:0009379">
    <property type="term" value="C:Holliday junction helicase complex"/>
    <property type="evidence" value="ECO:0007669"/>
    <property type="project" value="InterPro"/>
</dbReference>
<dbReference type="GO" id="GO:0048476">
    <property type="term" value="C:Holliday junction resolvase complex"/>
    <property type="evidence" value="ECO:0007669"/>
    <property type="project" value="UniProtKB-UniRule"/>
</dbReference>
<dbReference type="GO" id="GO:0005524">
    <property type="term" value="F:ATP binding"/>
    <property type="evidence" value="ECO:0007669"/>
    <property type="project" value="InterPro"/>
</dbReference>
<dbReference type="GO" id="GO:0000400">
    <property type="term" value="F:four-way junction DNA binding"/>
    <property type="evidence" value="ECO:0007669"/>
    <property type="project" value="UniProtKB-UniRule"/>
</dbReference>
<dbReference type="GO" id="GO:0009378">
    <property type="term" value="F:four-way junction helicase activity"/>
    <property type="evidence" value="ECO:0007669"/>
    <property type="project" value="InterPro"/>
</dbReference>
<dbReference type="GO" id="GO:0006310">
    <property type="term" value="P:DNA recombination"/>
    <property type="evidence" value="ECO:0007669"/>
    <property type="project" value="UniProtKB-UniRule"/>
</dbReference>
<dbReference type="GO" id="GO:0006281">
    <property type="term" value="P:DNA repair"/>
    <property type="evidence" value="ECO:0007669"/>
    <property type="project" value="UniProtKB-UniRule"/>
</dbReference>
<dbReference type="CDD" id="cd14332">
    <property type="entry name" value="UBA_RuvA_C"/>
    <property type="match status" value="1"/>
</dbReference>
<dbReference type="Gene3D" id="1.10.150.20">
    <property type="entry name" value="5' to 3' exonuclease, C-terminal subdomain"/>
    <property type="match status" value="1"/>
</dbReference>
<dbReference type="Gene3D" id="1.10.8.10">
    <property type="entry name" value="DNA helicase RuvA subunit, C-terminal domain"/>
    <property type="match status" value="1"/>
</dbReference>
<dbReference type="Gene3D" id="2.40.50.140">
    <property type="entry name" value="Nucleic acid-binding proteins"/>
    <property type="match status" value="1"/>
</dbReference>
<dbReference type="HAMAP" id="MF_00031">
    <property type="entry name" value="DNA_HJ_migration_RuvA"/>
    <property type="match status" value="1"/>
</dbReference>
<dbReference type="InterPro" id="IPR013849">
    <property type="entry name" value="DNA_helicase_Holl-junc_RuvA_I"/>
</dbReference>
<dbReference type="InterPro" id="IPR003583">
    <property type="entry name" value="Hlx-hairpin-Hlx_DNA-bd_motif"/>
</dbReference>
<dbReference type="InterPro" id="IPR012340">
    <property type="entry name" value="NA-bd_OB-fold"/>
</dbReference>
<dbReference type="InterPro" id="IPR000085">
    <property type="entry name" value="RuvA"/>
</dbReference>
<dbReference type="InterPro" id="IPR010994">
    <property type="entry name" value="RuvA_2-like"/>
</dbReference>
<dbReference type="InterPro" id="IPR011114">
    <property type="entry name" value="RuvA_C"/>
</dbReference>
<dbReference type="InterPro" id="IPR036267">
    <property type="entry name" value="RuvA_C_sf"/>
</dbReference>
<dbReference type="NCBIfam" id="TIGR00084">
    <property type="entry name" value="ruvA"/>
    <property type="match status" value="1"/>
</dbReference>
<dbReference type="Pfam" id="PF14520">
    <property type="entry name" value="HHH_5"/>
    <property type="match status" value="1"/>
</dbReference>
<dbReference type="Pfam" id="PF07499">
    <property type="entry name" value="RuvA_C"/>
    <property type="match status" value="1"/>
</dbReference>
<dbReference type="Pfam" id="PF01330">
    <property type="entry name" value="RuvA_N"/>
    <property type="match status" value="1"/>
</dbReference>
<dbReference type="SMART" id="SM00278">
    <property type="entry name" value="HhH1"/>
    <property type="match status" value="2"/>
</dbReference>
<dbReference type="SUPFAM" id="SSF46929">
    <property type="entry name" value="DNA helicase RuvA subunit, C-terminal domain"/>
    <property type="match status" value="1"/>
</dbReference>
<dbReference type="SUPFAM" id="SSF50249">
    <property type="entry name" value="Nucleic acid-binding proteins"/>
    <property type="match status" value="1"/>
</dbReference>
<dbReference type="SUPFAM" id="SSF47781">
    <property type="entry name" value="RuvA domain 2-like"/>
    <property type="match status" value="1"/>
</dbReference>
<feature type="chain" id="PRO_1000116985" description="Holliday junction branch migration complex subunit RuvA">
    <location>
        <begin position="1"/>
        <end position="197"/>
    </location>
</feature>
<feature type="region of interest" description="Domain I" evidence="1">
    <location>
        <begin position="1"/>
        <end position="63"/>
    </location>
</feature>
<feature type="region of interest" description="Domain II" evidence="1">
    <location>
        <begin position="64"/>
        <end position="142"/>
    </location>
</feature>
<feature type="region of interest" description="Flexible linker" evidence="1">
    <location>
        <begin position="143"/>
        <end position="147"/>
    </location>
</feature>
<feature type="region of interest" description="Domain III" evidence="1">
    <location>
        <begin position="148"/>
        <end position="197"/>
    </location>
</feature>